<comment type="function">
    <text evidence="2">Catalyzes the attachment of valine to tRNA(Val) in a two-step reaction: valine is first activated by ATP to form Val-AMP and then transferred to the acceptor end of tRNA(Val).</text>
</comment>
<comment type="catalytic activity">
    <reaction evidence="2">
        <text>tRNA(Val) + L-valine + ATP = L-valyl-tRNA(Val) + AMP + diphosphate</text>
        <dbReference type="Rhea" id="RHEA:10704"/>
        <dbReference type="Rhea" id="RHEA-COMP:9672"/>
        <dbReference type="Rhea" id="RHEA-COMP:9708"/>
        <dbReference type="ChEBI" id="CHEBI:30616"/>
        <dbReference type="ChEBI" id="CHEBI:33019"/>
        <dbReference type="ChEBI" id="CHEBI:57762"/>
        <dbReference type="ChEBI" id="CHEBI:78442"/>
        <dbReference type="ChEBI" id="CHEBI:78537"/>
        <dbReference type="ChEBI" id="CHEBI:456215"/>
        <dbReference type="EC" id="6.1.1.9"/>
    </reaction>
</comment>
<comment type="subcellular location">
    <subcellularLocation>
        <location evidence="5">Mitochondrion</location>
    </subcellularLocation>
</comment>
<comment type="similarity">
    <text evidence="5">Belongs to the class-I aminoacyl-tRNA synthetase family.</text>
</comment>
<comment type="sequence caution" evidence="5">
    <conflict type="erroneous initiation">
        <sequence resource="EMBL-CDS" id="BAC29932"/>
    </conflict>
    <text>Truncated N-terminus.</text>
</comment>
<comment type="sequence caution" evidence="5">
    <conflict type="erroneous initiation">
        <sequence resource="EMBL-CDS" id="BAD32566"/>
    </conflict>
    <text>Extended N-terminus.</text>
</comment>
<comment type="sequence caution" evidence="5">
    <conflict type="miscellaneous discrepancy">
        <sequence resource="EMBL-CDS" id="BAD32566"/>
    </conflict>
    <text>The sequence differs from that shown because it seems to be derived from a pre-mRNA.</text>
</comment>
<gene>
    <name type="primary">Vars2</name>
    <name type="synonym">Kiaa1885</name>
    <name type="synonym">Vars2l</name>
</gene>
<sequence length="1060" mass="118461">MPHLPLASFRPPLWGLRPSWGLSRPQALCTQPEPHGSPVSRRNREAKQKRLREKQAALEAGLAEKSKIPAVPTKAWSHKEVVLYEIPTGPGEKKDVSGPLPPAYSPQYVEAAWYQWWVREGFFKPEYQARLPQATGETFSMCIPPPNVTGSLHIGHALTVAIQDALVRWHRMRGDRVLWIPGSDHAGIATQAMVEKQLWKEQRVRRHELSREDFLRAVWQWKHEKGGEIYEQLCALGASLDWDRECFTMDAGSSAAVTEAFVRLYNSGLLYRNRQLVNWSCTLRSAISDIEVESRPLPGRTVLQLPGCPTPVSFGLLASVAFPVDGEPDTEIVVGTTRPETLPGDVAVAVHPDDPRYTHLHGRQLRHPLTGQLLPLITDTTVQPHVGTGAVKVTPAHSPIDAEIGTRHGLTPLSVIAEDGTMTSLCGDWLQGLHRFVAREKIMCTLREQGLFRGLQEHPMVLPICSRSGDVVEYLLKSQWFVRCQEMGDLAAKAVESGALELWPSFHQKSWQHWFAHIGDWCVSRQLWWGHQIPAYRVIGENAEDDRKECWVVGRSEAEARAVAAKRTGRPEAELTLERDPDVLDTWFSSALFPFSALGWPRETPDLAHFYPLTLLETGSDLLMFWVGRMVMLGTQLTGQLPFSKVLLHSMVRDRQGRKMSKSLGNVLDPRDIISGQELQVLQAKLRDGNLDPGELAVAAAAQKKDFPYGIPECGTDALRFALCSHGILGGDLHLSVSEVLNYRHFCNKLWNALRFVLRALGDNFVPQPAEEVTPSSPMDAWILSRLAFAASECERGFLSRELSLVTHTLYHFWLHNLCDVYLEAVKPVLSSVPRPPGPPQVLFSCADVGLRLLAPLMPFLAEELWQRLPPRPGGPLAPSICVAPYPSTRSLEFWRQPELERCFSRVQEVVQALRALRATYQLTKARPQVLLQCSDPGEQGLVQPFLEPLGILSHCGAVGFLSPGAAAPSGWALTPLGDTMKIYMELQGLVDPQSQLPRLTARRQKLQKQLDDLLNRTMSEGLAERQQRISSLHLELSKLDQAASYLQQLMDEAPSAREL</sequence>
<keyword id="KW-0007">Acetylation</keyword>
<keyword id="KW-0030">Aminoacyl-tRNA synthetase</keyword>
<keyword id="KW-0067">ATP-binding</keyword>
<keyword id="KW-0436">Ligase</keyword>
<keyword id="KW-0496">Mitochondrion</keyword>
<keyword id="KW-0547">Nucleotide-binding</keyword>
<keyword id="KW-0648">Protein biosynthesis</keyword>
<keyword id="KW-1185">Reference proteome</keyword>
<keyword id="KW-0809">Transit peptide</keyword>
<evidence type="ECO:0000250" key="1"/>
<evidence type="ECO:0000250" key="2">
    <source>
        <dbReference type="UniProtKB" id="Q5ST30"/>
    </source>
</evidence>
<evidence type="ECO:0000255" key="3"/>
<evidence type="ECO:0000256" key="4">
    <source>
        <dbReference type="SAM" id="MobiDB-lite"/>
    </source>
</evidence>
<evidence type="ECO:0000305" key="5"/>
<evidence type="ECO:0007744" key="6">
    <source>
    </source>
</evidence>
<organism>
    <name type="scientific">Mus musculus</name>
    <name type="common">Mouse</name>
    <dbReference type="NCBI Taxonomy" id="10090"/>
    <lineage>
        <taxon>Eukaryota</taxon>
        <taxon>Metazoa</taxon>
        <taxon>Chordata</taxon>
        <taxon>Craniata</taxon>
        <taxon>Vertebrata</taxon>
        <taxon>Euteleostomi</taxon>
        <taxon>Mammalia</taxon>
        <taxon>Eutheria</taxon>
        <taxon>Euarchontoglires</taxon>
        <taxon>Glires</taxon>
        <taxon>Rodentia</taxon>
        <taxon>Myomorpha</taxon>
        <taxon>Muroidea</taxon>
        <taxon>Muridae</taxon>
        <taxon>Murinae</taxon>
        <taxon>Mus</taxon>
        <taxon>Mus</taxon>
    </lineage>
</organism>
<protein>
    <recommendedName>
        <fullName>Valine--tRNA ligase, mitochondrial</fullName>
        <ecNumber evidence="2">6.1.1.9</ecNumber>
    </recommendedName>
    <alternativeName>
        <fullName>Valyl-tRNA synthetase</fullName>
        <shortName>ValRS</shortName>
    </alternativeName>
</protein>
<name>SYVM_MOUSE</name>
<accession>Q3U2A8</accession>
<accession>E9QMJ4</accession>
<accession>Q69Z78</accession>
<accession>Q6PGG3</accession>
<accession>Q6ZQL7</accession>
<accession>Q8BIN9</accession>
<feature type="transit peptide" description="Mitochondrion" evidence="3">
    <location>
        <begin position="1"/>
        <end position="15"/>
    </location>
</feature>
<feature type="chain" id="PRO_0000338002" description="Valine--tRNA ligase, mitochondrial">
    <location>
        <begin position="16"/>
        <end position="1060"/>
    </location>
</feature>
<feature type="region of interest" description="Disordered" evidence="4">
    <location>
        <begin position="25"/>
        <end position="50"/>
    </location>
</feature>
<feature type="short sequence motif" description="'HIGH' region">
    <location>
        <begin position="146"/>
        <end position="156"/>
    </location>
</feature>
<feature type="short sequence motif" description="'KMSKS' region">
    <location>
        <begin position="659"/>
        <end position="663"/>
    </location>
</feature>
<feature type="binding site" evidence="1">
    <location>
        <position position="662"/>
    </location>
    <ligand>
        <name>ATP</name>
        <dbReference type="ChEBI" id="CHEBI:30616"/>
    </ligand>
</feature>
<feature type="modified residue" description="N6-acetyllysine" evidence="6">
    <location>
        <position position="548"/>
    </location>
</feature>
<feature type="sequence conflict" description="In Ref. 1; BAD32566 and 3; BAC87668." evidence="5" ref="1 3">
    <original>A</original>
    <variation>V</variation>
    <location>
        <position position="57"/>
    </location>
</feature>
<feature type="sequence conflict" description="In Ref. 1; BAD32566 and 3; BAC87668/BAE33234." evidence="5" ref="1 3">
    <original>M</original>
    <variation>V</variation>
    <location>
        <position position="193"/>
    </location>
</feature>
<feature type="sequence conflict" description="In Ref. 1; BAD32566 and 3; BAC87668." evidence="5" ref="1 3">
    <original>E</original>
    <variation>L</variation>
    <location>
        <position position="327"/>
    </location>
</feature>
<feature type="sequence conflict" description="In Ref. 1; BAD32566 and 3; BAC87668." evidence="5" ref="1 3">
    <original>R</original>
    <variation>H</variation>
    <location>
        <position position="366"/>
    </location>
</feature>
<feature type="sequence conflict" description="In Ref. 3; BAC87668." evidence="5" ref="3">
    <original>Q</original>
    <variation>R</variation>
    <location>
        <position position="383"/>
    </location>
</feature>
<feature type="sequence conflict" description="In Ref. 1; BAD32566 and 3; BAC87668." evidence="5" ref="1 3">
    <original>I</original>
    <variation>M</variation>
    <location>
        <position position="404"/>
    </location>
</feature>
<feature type="sequence conflict" description="In Ref. 3; BAC87668." evidence="5" ref="3">
    <original>H</original>
    <variation>R</variation>
    <location>
        <position position="408"/>
    </location>
</feature>
<feature type="sequence conflict" description="In Ref. 1; BAD32566 and 3; BAC87668." evidence="5" ref="1 3">
    <original>Q</original>
    <variation>R</variation>
    <location>
        <position position="449"/>
    </location>
</feature>
<feature type="sequence conflict" description="In Ref. 1; BAD32566 and 3; BAC87668/BAE33234." evidence="5" ref="1 3">
    <original>L</original>
    <variation>R</variation>
    <location>
        <position position="490"/>
    </location>
</feature>
<feature type="sequence conflict" description="In Ref. 1; BAD32566 and 3; BAC87668." evidence="5" ref="1 3">
    <original>H</original>
    <variation>R</variation>
    <location>
        <position position="609"/>
    </location>
</feature>
<feature type="sequence conflict" description="In Ref. 1; BAD32566 and 3; BAC87668/BAE33234." evidence="5" ref="1 3">
    <original>T</original>
    <variation>A</variation>
    <location>
        <position position="889"/>
    </location>
</feature>
<feature type="sequence conflict" description="In Ref. 3; BAC87668." evidence="5" ref="3">
    <original>R</original>
    <variation>H</variation>
    <location>
        <position position="896"/>
    </location>
</feature>
<feature type="sequence conflict" description="In Ref. 3; BAC87668." evidence="5" ref="3">
    <location>
        <position position="944"/>
    </location>
</feature>
<feature type="sequence conflict" description="In Ref. 1; BAD32566 and 3; BAC87668/BAE33234." evidence="5" ref="1 3">
    <original>T</original>
    <variation>A</variation>
    <location>
        <position position="975"/>
    </location>
</feature>
<feature type="sequence conflict" description="In Ref. 3; BAE33234." evidence="5" ref="3">
    <original>M</original>
    <variation>V</variation>
    <location>
        <position position="1019"/>
    </location>
</feature>
<dbReference type="EC" id="6.1.1.9" evidence="2"/>
<dbReference type="EMBL" id="AK173288">
    <property type="protein sequence ID" value="BAD32566.1"/>
    <property type="status" value="ALT_SEQ"/>
    <property type="molecule type" value="Transcribed_RNA"/>
</dbReference>
<dbReference type="EMBL" id="AK038117">
    <property type="protein sequence ID" value="BAC29932.1"/>
    <property type="status" value="ALT_INIT"/>
    <property type="molecule type" value="mRNA"/>
</dbReference>
<dbReference type="EMBL" id="AK155386">
    <property type="protein sequence ID" value="BAE33234.1"/>
    <property type="molecule type" value="mRNA"/>
</dbReference>
<dbReference type="EMBL" id="AK129008">
    <property type="protein sequence ID" value="BAC87668.1"/>
    <property type="molecule type" value="mRNA"/>
</dbReference>
<dbReference type="EMBL" id="CR974483">
    <property type="status" value="NOT_ANNOTATED_CDS"/>
    <property type="molecule type" value="Genomic_DNA"/>
</dbReference>
<dbReference type="EMBL" id="BC057036">
    <property type="protein sequence ID" value="AAH57036.2"/>
    <property type="molecule type" value="mRNA"/>
</dbReference>
<dbReference type="CCDS" id="CCDS37602.1"/>
<dbReference type="RefSeq" id="NP_780346.3">
    <property type="nucleotide sequence ID" value="NM_175137.4"/>
</dbReference>
<dbReference type="SMR" id="Q3U2A8"/>
<dbReference type="BioGRID" id="213111">
    <property type="interactions" value="6"/>
</dbReference>
<dbReference type="FunCoup" id="Q3U2A8">
    <property type="interactions" value="846"/>
</dbReference>
<dbReference type="STRING" id="10090.ENSMUSP00000047917"/>
<dbReference type="GlyGen" id="Q3U2A8">
    <property type="glycosylation" value="3 sites"/>
</dbReference>
<dbReference type="iPTMnet" id="Q3U2A8"/>
<dbReference type="PhosphoSitePlus" id="Q3U2A8"/>
<dbReference type="PaxDb" id="10090-ENSMUSP00000047917"/>
<dbReference type="PeptideAtlas" id="Q3U2A8"/>
<dbReference type="ProteomicsDB" id="262924"/>
<dbReference type="Pumba" id="Q3U2A8"/>
<dbReference type="Antibodypedia" id="45126">
    <property type="antibodies" value="56 antibodies from 17 providers"/>
</dbReference>
<dbReference type="DNASU" id="68915"/>
<dbReference type="Ensembl" id="ENSMUST00000043674.15">
    <property type="protein sequence ID" value="ENSMUSP00000047917.9"/>
    <property type="gene ID" value="ENSMUSG00000038838.16"/>
</dbReference>
<dbReference type="GeneID" id="68915"/>
<dbReference type="KEGG" id="mmu:68915"/>
<dbReference type="UCSC" id="uc008cie.2">
    <property type="organism name" value="mouse"/>
</dbReference>
<dbReference type="AGR" id="MGI:1916165"/>
<dbReference type="CTD" id="57176"/>
<dbReference type="MGI" id="MGI:1916165">
    <property type="gene designation" value="Vars2"/>
</dbReference>
<dbReference type="VEuPathDB" id="HostDB:ENSMUSG00000038838"/>
<dbReference type="eggNOG" id="KOG0432">
    <property type="taxonomic scope" value="Eukaryota"/>
</dbReference>
<dbReference type="GeneTree" id="ENSGT00940000159890"/>
<dbReference type="HOGENOM" id="CLU_001493_0_1_1"/>
<dbReference type="InParanoid" id="Q3U2A8"/>
<dbReference type="OMA" id="RQWYIRN"/>
<dbReference type="OrthoDB" id="629407at2759"/>
<dbReference type="PhylomeDB" id="Q3U2A8"/>
<dbReference type="TreeFam" id="TF354250"/>
<dbReference type="BioGRID-ORCS" id="68915">
    <property type="hits" value="27 hits in 79 CRISPR screens"/>
</dbReference>
<dbReference type="PRO" id="PR:Q3U2A8"/>
<dbReference type="Proteomes" id="UP000000589">
    <property type="component" value="Chromosome 17"/>
</dbReference>
<dbReference type="RNAct" id="Q3U2A8">
    <property type="molecule type" value="protein"/>
</dbReference>
<dbReference type="Bgee" id="ENSMUSG00000038838">
    <property type="expression patterns" value="Expressed in animal zygote and 195 other cell types or tissues"/>
</dbReference>
<dbReference type="ExpressionAtlas" id="Q3U2A8">
    <property type="expression patterns" value="baseline and differential"/>
</dbReference>
<dbReference type="GO" id="GO:0005739">
    <property type="term" value="C:mitochondrion"/>
    <property type="evidence" value="ECO:0007005"/>
    <property type="project" value="MGI"/>
</dbReference>
<dbReference type="GO" id="GO:0002161">
    <property type="term" value="F:aminoacyl-tRNA deacylase activity"/>
    <property type="evidence" value="ECO:0007669"/>
    <property type="project" value="InterPro"/>
</dbReference>
<dbReference type="GO" id="GO:0005524">
    <property type="term" value="F:ATP binding"/>
    <property type="evidence" value="ECO:0007669"/>
    <property type="project" value="UniProtKB-KW"/>
</dbReference>
<dbReference type="GO" id="GO:0004832">
    <property type="term" value="F:valine-tRNA ligase activity"/>
    <property type="evidence" value="ECO:0000250"/>
    <property type="project" value="UniProtKB"/>
</dbReference>
<dbReference type="GO" id="GO:0006438">
    <property type="term" value="P:valyl-tRNA aminoacylation"/>
    <property type="evidence" value="ECO:0007669"/>
    <property type="project" value="InterPro"/>
</dbReference>
<dbReference type="CDD" id="cd07962">
    <property type="entry name" value="Anticodon_Ia_Val"/>
    <property type="match status" value="1"/>
</dbReference>
<dbReference type="CDD" id="cd00817">
    <property type="entry name" value="ValRS_core"/>
    <property type="match status" value="1"/>
</dbReference>
<dbReference type="FunFam" id="1.10.730.10:FF:000019">
    <property type="entry name" value="Valine--tRNA ligase, mitochondrial"/>
    <property type="match status" value="1"/>
</dbReference>
<dbReference type="FunFam" id="3.40.50.620:FF:000020">
    <property type="entry name" value="Valine--tRNA ligase, mitochondrial"/>
    <property type="match status" value="1"/>
</dbReference>
<dbReference type="FunFam" id="3.40.50.620:FF:000120">
    <property type="entry name" value="Valine--tRNA ligase, mitochondrial"/>
    <property type="match status" value="1"/>
</dbReference>
<dbReference type="FunFam" id="3.90.740.10:FF:000007">
    <property type="entry name" value="Valine--tRNA ligase, mitochondrial"/>
    <property type="match status" value="1"/>
</dbReference>
<dbReference type="FunFam" id="3.90.740.10:FF:000014">
    <property type="entry name" value="valine--tRNA ligase, mitochondrial"/>
    <property type="match status" value="1"/>
</dbReference>
<dbReference type="Gene3D" id="3.40.50.620">
    <property type="entry name" value="HUPs"/>
    <property type="match status" value="2"/>
</dbReference>
<dbReference type="Gene3D" id="1.10.730.10">
    <property type="entry name" value="Isoleucyl-tRNA Synthetase, Domain 1"/>
    <property type="match status" value="1"/>
</dbReference>
<dbReference type="Gene3D" id="3.90.740.10">
    <property type="entry name" value="Valyl/Leucyl/Isoleucyl-tRNA synthetase, editing domain"/>
    <property type="match status" value="2"/>
</dbReference>
<dbReference type="InterPro" id="IPR001412">
    <property type="entry name" value="aa-tRNA-synth_I_CS"/>
</dbReference>
<dbReference type="InterPro" id="IPR002300">
    <property type="entry name" value="aa-tRNA-synth_Ia"/>
</dbReference>
<dbReference type="InterPro" id="IPR033705">
    <property type="entry name" value="Anticodon_Ia_Val"/>
</dbReference>
<dbReference type="InterPro" id="IPR013155">
    <property type="entry name" value="M/V/L/I-tRNA-synth_anticd-bd"/>
</dbReference>
<dbReference type="InterPro" id="IPR014729">
    <property type="entry name" value="Rossmann-like_a/b/a_fold"/>
</dbReference>
<dbReference type="InterPro" id="IPR009080">
    <property type="entry name" value="tRNAsynth_Ia_anticodon-bd"/>
</dbReference>
<dbReference type="InterPro" id="IPR009008">
    <property type="entry name" value="Val/Leu/Ile-tRNA-synth_edit"/>
</dbReference>
<dbReference type="InterPro" id="IPR002303">
    <property type="entry name" value="Valyl-tRNA_ligase"/>
</dbReference>
<dbReference type="NCBIfam" id="NF004349">
    <property type="entry name" value="PRK05729.1"/>
    <property type="match status" value="1"/>
</dbReference>
<dbReference type="NCBIfam" id="TIGR00422">
    <property type="entry name" value="valS"/>
    <property type="match status" value="1"/>
</dbReference>
<dbReference type="PANTHER" id="PTHR11946:SF71">
    <property type="entry name" value="VALINE--TRNA LIGASE, MITOCHONDRIAL"/>
    <property type="match status" value="1"/>
</dbReference>
<dbReference type="PANTHER" id="PTHR11946">
    <property type="entry name" value="VALYL-TRNA SYNTHETASES"/>
    <property type="match status" value="1"/>
</dbReference>
<dbReference type="Pfam" id="PF08264">
    <property type="entry name" value="Anticodon_1"/>
    <property type="match status" value="1"/>
</dbReference>
<dbReference type="Pfam" id="PF00133">
    <property type="entry name" value="tRNA-synt_1"/>
    <property type="match status" value="1"/>
</dbReference>
<dbReference type="PRINTS" id="PR00986">
    <property type="entry name" value="TRNASYNTHVAL"/>
</dbReference>
<dbReference type="SUPFAM" id="SSF47323">
    <property type="entry name" value="Anticodon-binding domain of a subclass of class I aminoacyl-tRNA synthetases"/>
    <property type="match status" value="1"/>
</dbReference>
<dbReference type="SUPFAM" id="SSF52374">
    <property type="entry name" value="Nucleotidylyl transferase"/>
    <property type="match status" value="1"/>
</dbReference>
<dbReference type="SUPFAM" id="SSF50677">
    <property type="entry name" value="ValRS/IleRS/LeuRS editing domain"/>
    <property type="match status" value="1"/>
</dbReference>
<dbReference type="PROSITE" id="PS00178">
    <property type="entry name" value="AA_TRNA_LIGASE_I"/>
    <property type="match status" value="1"/>
</dbReference>
<reference key="1">
    <citation type="journal article" date="2004" name="DNA Res.">
        <title>Prediction of the coding sequences of mouse homologues of KIAA gene: IV. The complete nucleotide sequences of 500 mouse KIAA-homologous cDNAs identified by screening of terminal sequences of cDNA clones randomly sampled from size-fractionated libraries.</title>
        <authorList>
            <person name="Okazaki N."/>
            <person name="Kikuno R."/>
            <person name="Ohara R."/>
            <person name="Inamoto S."/>
            <person name="Koseki H."/>
            <person name="Hiraoka S."/>
            <person name="Saga Y."/>
            <person name="Seino S."/>
            <person name="Nishimura M."/>
            <person name="Kaisho T."/>
            <person name="Hoshino K."/>
            <person name="Kitamura H."/>
            <person name="Nagase T."/>
            <person name="Ohara O."/>
            <person name="Koga H."/>
        </authorList>
    </citation>
    <scope>NUCLEOTIDE SEQUENCE [LARGE SCALE MRNA]</scope>
</reference>
<reference key="2">
    <citation type="journal article" date="2005" name="Science">
        <title>The transcriptional landscape of the mammalian genome.</title>
        <authorList>
            <person name="Carninci P."/>
            <person name="Kasukawa T."/>
            <person name="Katayama S."/>
            <person name="Gough J."/>
            <person name="Frith M.C."/>
            <person name="Maeda N."/>
            <person name="Oyama R."/>
            <person name="Ravasi T."/>
            <person name="Lenhard B."/>
            <person name="Wells C."/>
            <person name="Kodzius R."/>
            <person name="Shimokawa K."/>
            <person name="Bajic V.B."/>
            <person name="Brenner S.E."/>
            <person name="Batalov S."/>
            <person name="Forrest A.R."/>
            <person name="Zavolan M."/>
            <person name="Davis M.J."/>
            <person name="Wilming L.G."/>
            <person name="Aidinis V."/>
            <person name="Allen J.E."/>
            <person name="Ambesi-Impiombato A."/>
            <person name="Apweiler R."/>
            <person name="Aturaliya R.N."/>
            <person name="Bailey T.L."/>
            <person name="Bansal M."/>
            <person name="Baxter L."/>
            <person name="Beisel K.W."/>
            <person name="Bersano T."/>
            <person name="Bono H."/>
            <person name="Chalk A.M."/>
            <person name="Chiu K.P."/>
            <person name="Choudhary V."/>
            <person name="Christoffels A."/>
            <person name="Clutterbuck D.R."/>
            <person name="Crowe M.L."/>
            <person name="Dalla E."/>
            <person name="Dalrymple B.P."/>
            <person name="de Bono B."/>
            <person name="Della Gatta G."/>
            <person name="di Bernardo D."/>
            <person name="Down T."/>
            <person name="Engstrom P."/>
            <person name="Fagiolini M."/>
            <person name="Faulkner G."/>
            <person name="Fletcher C.F."/>
            <person name="Fukushima T."/>
            <person name="Furuno M."/>
            <person name="Futaki S."/>
            <person name="Gariboldi M."/>
            <person name="Georgii-Hemming P."/>
            <person name="Gingeras T.R."/>
            <person name="Gojobori T."/>
            <person name="Green R.E."/>
            <person name="Gustincich S."/>
            <person name="Harbers M."/>
            <person name="Hayashi Y."/>
            <person name="Hensch T.K."/>
            <person name="Hirokawa N."/>
            <person name="Hill D."/>
            <person name="Huminiecki L."/>
            <person name="Iacono M."/>
            <person name="Ikeo K."/>
            <person name="Iwama A."/>
            <person name="Ishikawa T."/>
            <person name="Jakt M."/>
            <person name="Kanapin A."/>
            <person name="Katoh M."/>
            <person name="Kawasawa Y."/>
            <person name="Kelso J."/>
            <person name="Kitamura H."/>
            <person name="Kitano H."/>
            <person name="Kollias G."/>
            <person name="Krishnan S.P."/>
            <person name="Kruger A."/>
            <person name="Kummerfeld S.K."/>
            <person name="Kurochkin I.V."/>
            <person name="Lareau L.F."/>
            <person name="Lazarevic D."/>
            <person name="Lipovich L."/>
            <person name="Liu J."/>
            <person name="Liuni S."/>
            <person name="McWilliam S."/>
            <person name="Madan Babu M."/>
            <person name="Madera M."/>
            <person name="Marchionni L."/>
            <person name="Matsuda H."/>
            <person name="Matsuzawa S."/>
            <person name="Miki H."/>
            <person name="Mignone F."/>
            <person name="Miyake S."/>
            <person name="Morris K."/>
            <person name="Mottagui-Tabar S."/>
            <person name="Mulder N."/>
            <person name="Nakano N."/>
            <person name="Nakauchi H."/>
            <person name="Ng P."/>
            <person name="Nilsson R."/>
            <person name="Nishiguchi S."/>
            <person name="Nishikawa S."/>
            <person name="Nori F."/>
            <person name="Ohara O."/>
            <person name="Okazaki Y."/>
            <person name="Orlando V."/>
            <person name="Pang K.C."/>
            <person name="Pavan W.J."/>
            <person name="Pavesi G."/>
            <person name="Pesole G."/>
            <person name="Petrovsky N."/>
            <person name="Piazza S."/>
            <person name="Reed J."/>
            <person name="Reid J.F."/>
            <person name="Ring B.Z."/>
            <person name="Ringwald M."/>
            <person name="Rost B."/>
            <person name="Ruan Y."/>
            <person name="Salzberg S.L."/>
            <person name="Sandelin A."/>
            <person name="Schneider C."/>
            <person name="Schoenbach C."/>
            <person name="Sekiguchi K."/>
            <person name="Semple C.A."/>
            <person name="Seno S."/>
            <person name="Sessa L."/>
            <person name="Sheng Y."/>
            <person name="Shibata Y."/>
            <person name="Shimada H."/>
            <person name="Shimada K."/>
            <person name="Silva D."/>
            <person name="Sinclair B."/>
            <person name="Sperling S."/>
            <person name="Stupka E."/>
            <person name="Sugiura K."/>
            <person name="Sultana R."/>
            <person name="Takenaka Y."/>
            <person name="Taki K."/>
            <person name="Tammoja K."/>
            <person name="Tan S.L."/>
            <person name="Tang S."/>
            <person name="Taylor M.S."/>
            <person name="Tegner J."/>
            <person name="Teichmann S.A."/>
            <person name="Ueda H.R."/>
            <person name="van Nimwegen E."/>
            <person name="Verardo R."/>
            <person name="Wei C.L."/>
            <person name="Yagi K."/>
            <person name="Yamanishi H."/>
            <person name="Zabarovsky E."/>
            <person name="Zhu S."/>
            <person name="Zimmer A."/>
            <person name="Hide W."/>
            <person name="Bult C."/>
            <person name="Grimmond S.M."/>
            <person name="Teasdale R.D."/>
            <person name="Liu E.T."/>
            <person name="Brusic V."/>
            <person name="Quackenbush J."/>
            <person name="Wahlestedt C."/>
            <person name="Mattick J.S."/>
            <person name="Hume D.A."/>
            <person name="Kai C."/>
            <person name="Sasaki D."/>
            <person name="Tomaru Y."/>
            <person name="Fukuda S."/>
            <person name="Kanamori-Katayama M."/>
            <person name="Suzuki M."/>
            <person name="Aoki J."/>
            <person name="Arakawa T."/>
            <person name="Iida J."/>
            <person name="Imamura K."/>
            <person name="Itoh M."/>
            <person name="Kato T."/>
            <person name="Kawaji H."/>
            <person name="Kawagashira N."/>
            <person name="Kawashima T."/>
            <person name="Kojima M."/>
            <person name="Kondo S."/>
            <person name="Konno H."/>
            <person name="Nakano K."/>
            <person name="Ninomiya N."/>
            <person name="Nishio T."/>
            <person name="Okada M."/>
            <person name="Plessy C."/>
            <person name="Shibata K."/>
            <person name="Shiraki T."/>
            <person name="Suzuki S."/>
            <person name="Tagami M."/>
            <person name="Waki K."/>
            <person name="Watahiki A."/>
            <person name="Okamura-Oho Y."/>
            <person name="Suzuki H."/>
            <person name="Kawai J."/>
            <person name="Hayashizaki Y."/>
        </authorList>
    </citation>
    <scope>NUCLEOTIDE SEQUENCE [LARGE SCALE MRNA]</scope>
    <source>
        <strain>NOD</strain>
    </source>
</reference>
<reference key="3">
    <citation type="submission" date="2003-07" db="EMBL/GenBank/DDBJ databases">
        <title>NEDO cDNA sequencing project.</title>
        <authorList>
            <person name="Kanehori K."/>
            <person name="Ishibashi T."/>
            <person name="Chiba Y."/>
            <person name="Fujimori K."/>
            <person name="Hiraoka S."/>
            <person name="Tanai H."/>
            <person name="Watanabe S."/>
            <person name="Ishida S."/>
            <person name="Ono Y."/>
            <person name="Hotuta T."/>
            <person name="Watanabe M."/>
            <person name="Sugiyama T."/>
            <person name="Irie R."/>
            <person name="Otsuki T."/>
            <person name="Sato H."/>
            <person name="Ota T."/>
            <person name="Wakamatsu A."/>
            <person name="Ishii S."/>
            <person name="Yamamoto J."/>
            <person name="Isono Y."/>
            <person name="Kawai-Hio Y."/>
            <person name="Saito K."/>
            <person name="Nishikawa T."/>
            <person name="Kimura K."/>
            <person name="Matsuo K."/>
            <person name="Nakamura Y."/>
            <person name="Sekine M."/>
            <person name="Kikuchi H."/>
            <person name="Kanda K."/>
            <person name="Wagatsuma M."/>
            <person name="Takahashi-Fujii A."/>
            <person name="Oshima A."/>
            <person name="Sugiyama A."/>
            <person name="Kawakami B."/>
            <person name="Suzuki Y."/>
            <person name="Sugano S."/>
            <person name="Nagahari K."/>
            <person name="Masuho Y."/>
            <person name="Nagai K."/>
            <person name="Isogai T."/>
        </authorList>
    </citation>
    <scope>NUCLEOTIDE SEQUENCE [LARGE SCALE MRNA]</scope>
</reference>
<reference key="4">
    <citation type="journal article" date="2009" name="PLoS Biol.">
        <title>Lineage-specific biology revealed by a finished genome assembly of the mouse.</title>
        <authorList>
            <person name="Church D.M."/>
            <person name="Goodstadt L."/>
            <person name="Hillier L.W."/>
            <person name="Zody M.C."/>
            <person name="Goldstein S."/>
            <person name="She X."/>
            <person name="Bult C.J."/>
            <person name="Agarwala R."/>
            <person name="Cherry J.L."/>
            <person name="DiCuccio M."/>
            <person name="Hlavina W."/>
            <person name="Kapustin Y."/>
            <person name="Meric P."/>
            <person name="Maglott D."/>
            <person name="Birtle Z."/>
            <person name="Marques A.C."/>
            <person name="Graves T."/>
            <person name="Zhou S."/>
            <person name="Teague B."/>
            <person name="Potamousis K."/>
            <person name="Churas C."/>
            <person name="Place M."/>
            <person name="Herschleb J."/>
            <person name="Runnheim R."/>
            <person name="Forrest D."/>
            <person name="Amos-Landgraf J."/>
            <person name="Schwartz D.C."/>
            <person name="Cheng Z."/>
            <person name="Lindblad-Toh K."/>
            <person name="Eichler E.E."/>
            <person name="Ponting C.P."/>
        </authorList>
    </citation>
    <scope>NUCLEOTIDE SEQUENCE [LARGE SCALE GENOMIC DNA]</scope>
    <source>
        <strain>C57BL/6J</strain>
    </source>
</reference>
<reference key="5">
    <citation type="journal article" date="2004" name="Genome Res.">
        <title>The status, quality, and expansion of the NIH full-length cDNA project: the Mammalian Gene Collection (MGC).</title>
        <authorList>
            <consortium name="The MGC Project Team"/>
        </authorList>
    </citation>
    <scope>NUCLEOTIDE SEQUENCE [LARGE SCALE MRNA] OF 395-1060</scope>
    <source>
        <strain>C57BL/6J</strain>
        <tissue>Brain</tissue>
    </source>
</reference>
<reference key="6">
    <citation type="journal article" date="2010" name="Cell">
        <title>A tissue-specific atlas of mouse protein phosphorylation and expression.</title>
        <authorList>
            <person name="Huttlin E.L."/>
            <person name="Jedrychowski M.P."/>
            <person name="Elias J.E."/>
            <person name="Goswami T."/>
            <person name="Rad R."/>
            <person name="Beausoleil S.A."/>
            <person name="Villen J."/>
            <person name="Haas W."/>
            <person name="Sowa M.E."/>
            <person name="Gygi S.P."/>
        </authorList>
    </citation>
    <scope>IDENTIFICATION BY MASS SPECTROMETRY [LARGE SCALE ANALYSIS]</scope>
    <source>
        <tissue>Brain</tissue>
        <tissue>Brown adipose tissue</tissue>
        <tissue>Heart</tissue>
        <tissue>Kidney</tissue>
        <tissue>Liver</tissue>
        <tissue>Lung</tissue>
        <tissue>Spleen</tissue>
        <tissue>Testis</tissue>
    </source>
</reference>
<reference key="7">
    <citation type="journal article" date="2013" name="Proc. Natl. Acad. Sci. U.S.A.">
        <title>Label-free quantitative proteomics of the lysine acetylome in mitochondria identifies substrates of SIRT3 in metabolic pathways.</title>
        <authorList>
            <person name="Rardin M.J."/>
            <person name="Newman J.C."/>
            <person name="Held J.M."/>
            <person name="Cusack M.P."/>
            <person name="Sorensen D.J."/>
            <person name="Li B."/>
            <person name="Schilling B."/>
            <person name="Mooney S.D."/>
            <person name="Kahn C.R."/>
            <person name="Verdin E."/>
            <person name="Gibson B.W."/>
        </authorList>
    </citation>
    <scope>ACETYLATION [LARGE SCALE ANALYSIS] AT LYS-548</scope>
    <scope>IDENTIFICATION BY MASS SPECTROMETRY [LARGE SCALE ANALYSIS]</scope>
    <source>
        <tissue>Liver</tissue>
    </source>
</reference>
<proteinExistence type="evidence at protein level"/>